<dbReference type="EMBL" id="AE014296">
    <property type="protein sequence ID" value="AAF47793.1"/>
    <property type="molecule type" value="Genomic_DNA"/>
</dbReference>
<dbReference type="EMBL" id="BT015983">
    <property type="protein sequence ID" value="AAV36868.1"/>
    <property type="molecule type" value="mRNA"/>
</dbReference>
<dbReference type="RefSeq" id="NP_647830.1">
    <property type="nucleotide sequence ID" value="NM_139573.2"/>
</dbReference>
<dbReference type="SMR" id="Q9VZM7"/>
<dbReference type="FunCoup" id="Q9VZM7">
    <property type="interactions" value="1633"/>
</dbReference>
<dbReference type="IntAct" id="Q9VZM7">
    <property type="interactions" value="11"/>
</dbReference>
<dbReference type="STRING" id="7227.FBpp0073007"/>
<dbReference type="PaxDb" id="7227-FBpp0073007"/>
<dbReference type="DNASU" id="38444"/>
<dbReference type="EnsemblMetazoa" id="FBtr0073148">
    <property type="protein sequence ID" value="FBpp0073007"/>
    <property type="gene ID" value="FBgn0035462"/>
</dbReference>
<dbReference type="GeneID" id="38444"/>
<dbReference type="KEGG" id="dme:Dmel_CG1120"/>
<dbReference type="UCSC" id="CG1120-RA">
    <property type="organism name" value="d. melanogaster"/>
</dbReference>
<dbReference type="AGR" id="FB:FBgn0035462"/>
<dbReference type="CTD" id="55174"/>
<dbReference type="FlyBase" id="FBgn0035462">
    <property type="gene designation" value="IntS10"/>
</dbReference>
<dbReference type="VEuPathDB" id="VectorBase:FBgn0035462"/>
<dbReference type="eggNOG" id="ENOG502QQ28">
    <property type="taxonomic scope" value="Eukaryota"/>
</dbReference>
<dbReference type="GeneTree" id="ENSGT00390000010950"/>
<dbReference type="HOGENOM" id="CLU_023740_0_0_1"/>
<dbReference type="InParanoid" id="Q9VZM7"/>
<dbReference type="OMA" id="FYVKMFQ"/>
<dbReference type="OrthoDB" id="18145at2759"/>
<dbReference type="PhylomeDB" id="Q9VZM7"/>
<dbReference type="Reactome" id="R-DME-6807505">
    <property type="pathway name" value="RNA polymerase II transcribes snRNA genes"/>
</dbReference>
<dbReference type="BioGRID-ORCS" id="38444">
    <property type="hits" value="0 hits in 1 CRISPR screen"/>
</dbReference>
<dbReference type="ChiTaRS" id="IntS10">
    <property type="organism name" value="fly"/>
</dbReference>
<dbReference type="GenomeRNAi" id="38444"/>
<dbReference type="PRO" id="PR:Q9VZM7"/>
<dbReference type="Proteomes" id="UP000000803">
    <property type="component" value="Chromosome 3L"/>
</dbReference>
<dbReference type="Bgee" id="FBgn0035462">
    <property type="expression patterns" value="Expressed in adult anterior midgut class I enteroendocrine cell in adult midgut (Drosophila) and 51 other cell types or tissues"/>
</dbReference>
<dbReference type="GO" id="GO:0160232">
    <property type="term" value="C:INTAC complex"/>
    <property type="evidence" value="ECO:0000314"/>
    <property type="project" value="UniProtKB"/>
</dbReference>
<dbReference type="GO" id="GO:0032039">
    <property type="term" value="C:integrator complex"/>
    <property type="evidence" value="ECO:0000314"/>
    <property type="project" value="UniProtKB"/>
</dbReference>
<dbReference type="GO" id="GO:0005634">
    <property type="term" value="C:nucleus"/>
    <property type="evidence" value="ECO:0000314"/>
    <property type="project" value="FlyBase"/>
</dbReference>
<dbReference type="GO" id="GO:0160240">
    <property type="term" value="P:RNA polymerase II transcription initiation surveillance"/>
    <property type="evidence" value="ECO:0000314"/>
    <property type="project" value="UniProtKB"/>
</dbReference>
<dbReference type="GO" id="GO:0016180">
    <property type="term" value="P:snRNA processing"/>
    <property type="evidence" value="ECO:0000250"/>
    <property type="project" value="FlyBase"/>
</dbReference>
<dbReference type="InterPro" id="IPR016024">
    <property type="entry name" value="ARM-type_fold"/>
</dbReference>
<dbReference type="InterPro" id="IPR026164">
    <property type="entry name" value="Int_cplx_su10"/>
</dbReference>
<dbReference type="PANTHER" id="PTHR16055">
    <property type="entry name" value="INTEGRATOR COMPLEX SUBUNIT 10"/>
    <property type="match status" value="1"/>
</dbReference>
<dbReference type="PANTHER" id="PTHR16055:SF2">
    <property type="entry name" value="INTEGRATOR COMPLEX SUBUNIT 10"/>
    <property type="match status" value="1"/>
</dbReference>
<dbReference type="Pfam" id="PF21045">
    <property type="entry name" value="INT10"/>
    <property type="match status" value="2"/>
</dbReference>
<dbReference type="SUPFAM" id="SSF48371">
    <property type="entry name" value="ARM repeat"/>
    <property type="match status" value="1"/>
</dbReference>
<gene>
    <name evidence="9 12" type="primary">IntS10</name>
    <name evidence="12" type="ORF">CG1120</name>
</gene>
<name>INT10_DROME</name>
<sequence>MPSQEENELYMVKEAQRLRKSDPCAAMAWIITAKTLYPNAFNLQYEAYLLERDAQNYEEAAKCFSAIATNFQNQHTELWQEINSLTNALRNENETTPEHEFYVKMYKHLTPEVQHNIFMHTINHSADNLERIYIYILMFNKFPKSAITQAPRLLEMLAEGMKTEPDLYQRILVEEVLPMIQNKPPELSPNLACRLYTSSLEFYLRQIMDESDTADAWKNIFKVLMICGQMMGWEPFLPFSKHVNQNVYWEKLVDILSGSPAGSSQVLFYATTLFIYSLHGYIRNCKLRIEDADVTHVLVEGFMEWSPEGDGSEVPSMEPPKFSLTTAISPELSKAFLHAAQCWQLLNTDQFQRDFSQLMLALPLAPWISRFLFDLAIYFGHRDEANKLMADMTTQSSLVQSLQILSLNLMQGSMTLQGFQCILKILSELPTTQGQLLENMSLKGHRHMVFLPLTRSALVQYCVGAIISRLSRKVFEPNVPDRLLGDILVLQQLNLLNDVLLTQQIFNLIKQRKSFNLRTLSTYIINIDLLEELSHIWNSQQEDNFELTSSPNSSGTPTATTVAGGSQSRRIGTRGADKGARDEFRAITRQQIARCNENVITLLANFINQEHLMLAQHIFGISQPVETIVIK</sequence>
<comment type="function">
    <text evidence="2 3 5">Component of the integrator complex, a multiprotein complex that terminates RNA polymerase II (Pol II) transcription in the promoter-proximal region of genes (PubMed:21078872, PubMed:23097424, PubMed:32966759). The integrator complex provides a quality checkpoint during transcription elongation by driving premature transcription termination of transcripts that are unfavorably configured for transcriptional elongation: the complex terminates transcription by (1) catalyzing dephosphorylation of the C-terminal domain (CTD) of Pol II subunit Polr2A/Rbp1 and Spt5, and (2) degrading the exiting nascent RNA transcript via endonuclease activity (PubMed:32966759). The integrator complex is also involved in the 3'-end processing of the U7 snRNA, and also the spliceosomal snRNAs U1, U2, U4 and U5 (PubMed:21078872, PubMed:23097424).</text>
</comment>
<comment type="subunit">
    <text evidence="3 4 5 6 7">Belongs to the multiprotein complex Integrator, at least composed of IntS1, IntS2, IntS3, IntS4, omd/IntS5, IntS6, defl/IntS7, IntS8, IntS9, IntS10, IntS11, IntS12, asun/IntS13, IntS14 and IntS15 (PubMed:23097424, PubMed:31530651, PubMed:32966759, PubMed:37995689, PubMed:39032490). The core complex associates with protein phosphatase 2A subunits mts/PP2A and Pp2A-29B, to form the Integrator-PP2A (INTAC) complex (PubMed:32966759, PubMed:37995689).</text>
</comment>
<comment type="subcellular location">
    <subcellularLocation>
        <location evidence="7">Nucleus</location>
    </subcellularLocation>
</comment>
<comment type="similarity">
    <text evidence="10">Belongs to the Integrator subunit 10 family.</text>
</comment>
<evidence type="ECO:0000256" key="1">
    <source>
        <dbReference type="SAM" id="MobiDB-lite"/>
    </source>
</evidence>
<evidence type="ECO:0000269" key="2">
    <source>
    </source>
</evidence>
<evidence type="ECO:0000269" key="3">
    <source>
    </source>
</evidence>
<evidence type="ECO:0000269" key="4">
    <source>
    </source>
</evidence>
<evidence type="ECO:0000269" key="5">
    <source>
    </source>
</evidence>
<evidence type="ECO:0000269" key="6">
    <source>
    </source>
</evidence>
<evidence type="ECO:0000269" key="7">
    <source>
    </source>
</evidence>
<evidence type="ECO:0000303" key="8">
    <source>
    </source>
</evidence>
<evidence type="ECO:0000303" key="9">
    <source>
    </source>
</evidence>
<evidence type="ECO:0000305" key="10"/>
<evidence type="ECO:0000312" key="11">
    <source>
        <dbReference type="EMBL" id="AAV36868.1"/>
    </source>
</evidence>
<evidence type="ECO:0000312" key="12">
    <source>
        <dbReference type="FlyBase" id="FBgn0035462"/>
    </source>
</evidence>
<evidence type="ECO:0000312" key="13">
    <source>
        <dbReference type="Proteomes" id="UP000000803"/>
    </source>
</evidence>
<accession>Q9VZM7</accession>
<proteinExistence type="evidence at protein level"/>
<organism evidence="13">
    <name type="scientific">Drosophila melanogaster</name>
    <name type="common">Fruit fly</name>
    <dbReference type="NCBI Taxonomy" id="7227"/>
    <lineage>
        <taxon>Eukaryota</taxon>
        <taxon>Metazoa</taxon>
        <taxon>Ecdysozoa</taxon>
        <taxon>Arthropoda</taxon>
        <taxon>Hexapoda</taxon>
        <taxon>Insecta</taxon>
        <taxon>Pterygota</taxon>
        <taxon>Neoptera</taxon>
        <taxon>Endopterygota</taxon>
        <taxon>Diptera</taxon>
        <taxon>Brachycera</taxon>
        <taxon>Muscomorpha</taxon>
        <taxon>Ephydroidea</taxon>
        <taxon>Drosophilidae</taxon>
        <taxon>Drosophila</taxon>
        <taxon>Sophophora</taxon>
    </lineage>
</organism>
<reference evidence="13" key="1">
    <citation type="journal article" date="2000" name="Science">
        <title>The genome sequence of Drosophila melanogaster.</title>
        <authorList>
            <person name="Adams M.D."/>
            <person name="Celniker S.E."/>
            <person name="Holt R.A."/>
            <person name="Evans C.A."/>
            <person name="Gocayne J.D."/>
            <person name="Amanatides P.G."/>
            <person name="Scherer S.E."/>
            <person name="Li P.W."/>
            <person name="Hoskins R.A."/>
            <person name="Galle R.F."/>
            <person name="George R.A."/>
            <person name="Lewis S.E."/>
            <person name="Richards S."/>
            <person name="Ashburner M."/>
            <person name="Henderson S.N."/>
            <person name="Sutton G.G."/>
            <person name="Wortman J.R."/>
            <person name="Yandell M.D."/>
            <person name="Zhang Q."/>
            <person name="Chen L.X."/>
            <person name="Brandon R.C."/>
            <person name="Rogers Y.-H.C."/>
            <person name="Blazej R.G."/>
            <person name="Champe M."/>
            <person name="Pfeiffer B.D."/>
            <person name="Wan K.H."/>
            <person name="Doyle C."/>
            <person name="Baxter E.G."/>
            <person name="Helt G."/>
            <person name="Nelson C.R."/>
            <person name="Miklos G.L.G."/>
            <person name="Abril J.F."/>
            <person name="Agbayani A."/>
            <person name="An H.-J."/>
            <person name="Andrews-Pfannkoch C."/>
            <person name="Baldwin D."/>
            <person name="Ballew R.M."/>
            <person name="Basu A."/>
            <person name="Baxendale J."/>
            <person name="Bayraktaroglu L."/>
            <person name="Beasley E.M."/>
            <person name="Beeson K.Y."/>
            <person name="Benos P.V."/>
            <person name="Berman B.P."/>
            <person name="Bhandari D."/>
            <person name="Bolshakov S."/>
            <person name="Borkova D."/>
            <person name="Botchan M.R."/>
            <person name="Bouck J."/>
            <person name="Brokstein P."/>
            <person name="Brottier P."/>
            <person name="Burtis K.C."/>
            <person name="Busam D.A."/>
            <person name="Butler H."/>
            <person name="Cadieu E."/>
            <person name="Center A."/>
            <person name="Chandra I."/>
            <person name="Cherry J.M."/>
            <person name="Cawley S."/>
            <person name="Dahlke C."/>
            <person name="Davenport L.B."/>
            <person name="Davies P."/>
            <person name="de Pablos B."/>
            <person name="Delcher A."/>
            <person name="Deng Z."/>
            <person name="Mays A.D."/>
            <person name="Dew I."/>
            <person name="Dietz S.M."/>
            <person name="Dodson K."/>
            <person name="Doup L.E."/>
            <person name="Downes M."/>
            <person name="Dugan-Rocha S."/>
            <person name="Dunkov B.C."/>
            <person name="Dunn P."/>
            <person name="Durbin K.J."/>
            <person name="Evangelista C.C."/>
            <person name="Ferraz C."/>
            <person name="Ferriera S."/>
            <person name="Fleischmann W."/>
            <person name="Fosler C."/>
            <person name="Gabrielian A.E."/>
            <person name="Garg N.S."/>
            <person name="Gelbart W.M."/>
            <person name="Glasser K."/>
            <person name="Glodek A."/>
            <person name="Gong F."/>
            <person name="Gorrell J.H."/>
            <person name="Gu Z."/>
            <person name="Guan P."/>
            <person name="Harris M."/>
            <person name="Harris N.L."/>
            <person name="Harvey D.A."/>
            <person name="Heiman T.J."/>
            <person name="Hernandez J.R."/>
            <person name="Houck J."/>
            <person name="Hostin D."/>
            <person name="Houston K.A."/>
            <person name="Howland T.J."/>
            <person name="Wei M.-H."/>
            <person name="Ibegwam C."/>
            <person name="Jalali M."/>
            <person name="Kalush F."/>
            <person name="Karpen G.H."/>
            <person name="Ke Z."/>
            <person name="Kennison J.A."/>
            <person name="Ketchum K.A."/>
            <person name="Kimmel B.E."/>
            <person name="Kodira C.D."/>
            <person name="Kraft C.L."/>
            <person name="Kravitz S."/>
            <person name="Kulp D."/>
            <person name="Lai Z."/>
            <person name="Lasko P."/>
            <person name="Lei Y."/>
            <person name="Levitsky A.A."/>
            <person name="Li J.H."/>
            <person name="Li Z."/>
            <person name="Liang Y."/>
            <person name="Lin X."/>
            <person name="Liu X."/>
            <person name="Mattei B."/>
            <person name="McIntosh T.C."/>
            <person name="McLeod M.P."/>
            <person name="McPherson D."/>
            <person name="Merkulov G."/>
            <person name="Milshina N.V."/>
            <person name="Mobarry C."/>
            <person name="Morris J."/>
            <person name="Moshrefi A."/>
            <person name="Mount S.M."/>
            <person name="Moy M."/>
            <person name="Murphy B."/>
            <person name="Murphy L."/>
            <person name="Muzny D.M."/>
            <person name="Nelson D.L."/>
            <person name="Nelson D.R."/>
            <person name="Nelson K.A."/>
            <person name="Nixon K."/>
            <person name="Nusskern D.R."/>
            <person name="Pacleb J.M."/>
            <person name="Palazzolo M."/>
            <person name="Pittman G.S."/>
            <person name="Pan S."/>
            <person name="Pollard J."/>
            <person name="Puri V."/>
            <person name="Reese M.G."/>
            <person name="Reinert K."/>
            <person name="Remington K."/>
            <person name="Saunders R.D.C."/>
            <person name="Scheeler F."/>
            <person name="Shen H."/>
            <person name="Shue B.C."/>
            <person name="Siden-Kiamos I."/>
            <person name="Simpson M."/>
            <person name="Skupski M.P."/>
            <person name="Smith T.J."/>
            <person name="Spier E."/>
            <person name="Spradling A.C."/>
            <person name="Stapleton M."/>
            <person name="Strong R."/>
            <person name="Sun E."/>
            <person name="Svirskas R."/>
            <person name="Tector C."/>
            <person name="Turner R."/>
            <person name="Venter E."/>
            <person name="Wang A.H."/>
            <person name="Wang X."/>
            <person name="Wang Z.-Y."/>
            <person name="Wassarman D.A."/>
            <person name="Weinstock G.M."/>
            <person name="Weissenbach J."/>
            <person name="Williams S.M."/>
            <person name="Woodage T."/>
            <person name="Worley K.C."/>
            <person name="Wu D."/>
            <person name="Yang S."/>
            <person name="Yao Q.A."/>
            <person name="Ye J."/>
            <person name="Yeh R.-F."/>
            <person name="Zaveri J.S."/>
            <person name="Zhan M."/>
            <person name="Zhang G."/>
            <person name="Zhao Q."/>
            <person name="Zheng L."/>
            <person name="Zheng X.H."/>
            <person name="Zhong F.N."/>
            <person name="Zhong W."/>
            <person name="Zhou X."/>
            <person name="Zhu S.C."/>
            <person name="Zhu X."/>
            <person name="Smith H.O."/>
            <person name="Gibbs R.A."/>
            <person name="Myers E.W."/>
            <person name="Rubin G.M."/>
            <person name="Venter J.C."/>
        </authorList>
    </citation>
    <scope>NUCLEOTIDE SEQUENCE [LARGE SCALE GENOMIC DNA]</scope>
    <source>
        <strain evidence="13">Berkeley</strain>
    </source>
</reference>
<reference evidence="13" key="2">
    <citation type="journal article" date="2002" name="Genome Biol.">
        <title>Annotation of the Drosophila melanogaster euchromatic genome: a systematic review.</title>
        <authorList>
            <person name="Misra S."/>
            <person name="Crosby M.A."/>
            <person name="Mungall C.J."/>
            <person name="Matthews B.B."/>
            <person name="Campbell K.S."/>
            <person name="Hradecky P."/>
            <person name="Huang Y."/>
            <person name="Kaminker J.S."/>
            <person name="Millburn G.H."/>
            <person name="Prochnik S.E."/>
            <person name="Smith C.D."/>
            <person name="Tupy J.L."/>
            <person name="Whitfield E.J."/>
            <person name="Bayraktaroglu L."/>
            <person name="Berman B.P."/>
            <person name="Bettencourt B.R."/>
            <person name="Celniker S.E."/>
            <person name="de Grey A.D.N.J."/>
            <person name="Drysdale R.A."/>
            <person name="Harris N.L."/>
            <person name="Richter J."/>
            <person name="Russo S."/>
            <person name="Schroeder A.J."/>
            <person name="Shu S.Q."/>
            <person name="Stapleton M."/>
            <person name="Yamada C."/>
            <person name="Ashburner M."/>
            <person name="Gelbart W.M."/>
            <person name="Rubin G.M."/>
            <person name="Lewis S.E."/>
        </authorList>
    </citation>
    <scope>GENOME REANNOTATION</scope>
    <source>
        <strain evidence="13">Berkeley</strain>
    </source>
</reference>
<reference evidence="11" key="3">
    <citation type="submission" date="2004-10" db="EMBL/GenBank/DDBJ databases">
        <authorList>
            <person name="Stapleton M."/>
            <person name="Carlson J."/>
            <person name="Chavez C."/>
            <person name="Frise E."/>
            <person name="George R."/>
            <person name="Pacleb J."/>
            <person name="Park S."/>
            <person name="Wan K."/>
            <person name="Yu C."/>
            <person name="Rubin G.M."/>
            <person name="Celniker S."/>
        </authorList>
    </citation>
    <scope>NUCLEOTIDE SEQUENCE [LARGE SCALE MRNA]</scope>
    <source>
        <strain evidence="11">Berkeley</strain>
        <tissue evidence="11">Embryo</tissue>
    </source>
</reference>
<reference evidence="10" key="4">
    <citation type="journal article" date="2011" name="Mol. Cell. Biol.">
        <title>A subset of Drosophila integrator proteins is essential for efficient U7 snRNA and spliceosomal snRNA 3'-end formation.</title>
        <authorList>
            <person name="Ezzeddine N."/>
            <person name="Chen J."/>
            <person name="Waltenspiel B."/>
            <person name="Burch B."/>
            <person name="Albrecht T."/>
            <person name="Zhuo M."/>
            <person name="Warren W.D."/>
            <person name="Marzluff W.F."/>
            <person name="Wagner E.J."/>
        </authorList>
    </citation>
    <scope>FUNCTION</scope>
</reference>
<reference evidence="10" key="5">
    <citation type="journal article" date="2012" name="RNA">
        <title>An RNAi screen identifies additional members of the Drosophila Integrator complex and a requirement for cyclin C/Cdk8 in snRNA 3'-end formation.</title>
        <authorList>
            <person name="Chen J."/>
            <person name="Ezzeddine N."/>
            <person name="Waltenspiel B."/>
            <person name="Albrecht T.R."/>
            <person name="Warren W.D."/>
            <person name="Marzluff W.F."/>
            <person name="Wagner E.J."/>
        </authorList>
    </citation>
    <scope>FUNCTION</scope>
    <scope>SUBUNIT</scope>
</reference>
<reference key="6">
    <citation type="journal article" date="2019" name="Genes Dev.">
        <title>The Integrator complex cleaves nascent mRNAs to attenuate transcription.</title>
        <authorList>
            <person name="Tatomer D.C."/>
            <person name="Elrod N.D."/>
            <person name="Liang D."/>
            <person name="Xiao M.S."/>
            <person name="Jiang J.Z."/>
            <person name="Jonathan M."/>
            <person name="Huang K.L."/>
            <person name="Wagner E.J."/>
            <person name="Cherry S."/>
            <person name="Wilusz J.E."/>
        </authorList>
    </citation>
    <scope>IDENTIFICATION IN THE INTEGRATOR COMPLEX</scope>
</reference>
<reference key="7">
    <citation type="journal article" date="2020" name="Mol. Cell">
        <title>Integrator recruits protein phosphatase 2A to prevent pause release and facilitate transcription termination.</title>
        <authorList>
            <person name="Huang K.L."/>
            <person name="Jee D."/>
            <person name="Stein C.B."/>
            <person name="Elrod N.D."/>
            <person name="Henriques T."/>
            <person name="Mascibroda L.G."/>
            <person name="Baillat D."/>
            <person name="Russell W.K."/>
            <person name="Adelman K."/>
            <person name="Wagner E.J."/>
        </authorList>
    </citation>
    <scope>FUNCTION</scope>
    <scope>IDENTIFICATION IN THE INTAC COMPLEX</scope>
</reference>
<reference key="8">
    <citation type="journal article" date="2023" name="Mol. Cell">
        <title>IntS6 and the Integrator phosphatase module tune the efficiency of select premature transcription termination events.</title>
        <authorList>
            <person name="Fujiwara R."/>
            <person name="Zhai S.N."/>
            <person name="Liang D."/>
            <person name="Shah A.P."/>
            <person name="Tracey M."/>
            <person name="Ma X.K."/>
            <person name="Fields C.J."/>
            <person name="Mendoza-Figueroa M.S."/>
            <person name="Meline M.C."/>
            <person name="Tatomer D.C."/>
            <person name="Yang L."/>
            <person name="Wilusz J.E."/>
        </authorList>
    </citation>
    <scope>IDENTIFICATION IN THE INTAC COMPLEX</scope>
</reference>
<reference key="9">
    <citation type="journal article" date="2024" name="Mol. Cell">
        <title>Cytoplasmic binding partners of the Integrator endonuclease INTS11 and its paralog CPSF73 are required for their nuclear function.</title>
        <authorList>
            <person name="Lin M.H."/>
            <person name="Jensen M.K."/>
            <person name="Elrod N.D."/>
            <person name="Chu H.F."/>
            <person name="Haseley M."/>
            <person name="Beam A.C."/>
            <person name="Huang K.L."/>
            <person name="Chiang W."/>
            <person name="Russell W.K."/>
            <person name="Williams K."/>
            <person name="Proschel C."/>
            <person name="Wagner E.J."/>
            <person name="Tong L."/>
        </authorList>
    </citation>
    <scope>IDENTIFICATION IN THE INTEGRATOR COMPLEX</scope>
    <scope>SUBCELLULAR LOCATION</scope>
</reference>
<feature type="chain" id="PRO_0000437662" description="Integrator complex subunit 10">
    <location>
        <begin position="1"/>
        <end position="631"/>
    </location>
</feature>
<feature type="region of interest" description="Disordered" evidence="1">
    <location>
        <begin position="545"/>
        <end position="577"/>
    </location>
</feature>
<feature type="compositionally biased region" description="Polar residues" evidence="1">
    <location>
        <begin position="545"/>
        <end position="570"/>
    </location>
</feature>
<protein>
    <recommendedName>
        <fullName evidence="8">Integrator complex subunit 10</fullName>
    </recommendedName>
</protein>
<keyword id="KW-0539">Nucleus</keyword>
<keyword id="KW-1185">Reference proteome</keyword>